<proteinExistence type="evidence at protein level"/>
<sequence length="219" mass="25073">MNSSKSSETQCTERGCFSSQMFLWTVAGIPILFLSACFITRCVVTFRIFQTCDEKKFQLPENFTELSCYNYGSGSVKNCCPLNWEYFQSSCYFFSTDTISWALSLKNCSAMGAHLVVINSQEEQEFLSYKKPKMREFFIGLSDQVVEGQWQWVDGTPLTKSLSFWDVGEPNNIATLEDCATMRDSSNPRQNWNDVTCFLNYFRICEMVGINPLNKGKSL</sequence>
<keyword id="KW-0002">3D-structure</keyword>
<keyword id="KW-0106">Calcium</keyword>
<keyword id="KW-1003">Cell membrane</keyword>
<keyword id="KW-0966">Cell projection</keyword>
<keyword id="KW-1015">Disulfide bond</keyword>
<keyword id="KW-0325">Glycoprotein</keyword>
<keyword id="KW-0391">Immunity</keyword>
<keyword id="KW-0399">Innate immunity</keyword>
<keyword id="KW-0430">Lectin</keyword>
<keyword id="KW-0472">Membrane</keyword>
<keyword id="KW-0479">Metal-binding</keyword>
<keyword id="KW-1267">Proteomics identification</keyword>
<keyword id="KW-1185">Reference proteome</keyword>
<keyword id="KW-0735">Signal-anchor</keyword>
<keyword id="KW-0812">Transmembrane</keyword>
<keyword id="KW-1133">Transmembrane helix</keyword>
<dbReference type="EMBL" id="AB024718">
    <property type="protein sequence ID" value="BAA83755.1"/>
    <property type="molecule type" value="mRNA"/>
</dbReference>
<dbReference type="EMBL" id="AY358499">
    <property type="protein sequence ID" value="AAQ88863.1"/>
    <property type="molecule type" value="mRNA"/>
</dbReference>
<dbReference type="EMBL" id="AK312671">
    <property type="protein sequence ID" value="BAG35553.1"/>
    <property type="molecule type" value="mRNA"/>
</dbReference>
<dbReference type="EMBL" id="AC092746">
    <property type="status" value="NOT_ANNOTATED_CDS"/>
    <property type="molecule type" value="Genomic_DNA"/>
</dbReference>
<dbReference type="EMBL" id="CH471116">
    <property type="protein sequence ID" value="EAW88618.1"/>
    <property type="molecule type" value="Genomic_DNA"/>
</dbReference>
<dbReference type="EMBL" id="BC000715">
    <property type="protein sequence ID" value="AAH00715.1"/>
    <property type="molecule type" value="mRNA"/>
</dbReference>
<dbReference type="CCDS" id="CCDS8594.1"/>
<dbReference type="RefSeq" id="NP_055173.1">
    <property type="nucleotide sequence ID" value="NM_014358.4"/>
</dbReference>
<dbReference type="PDB" id="3WH2">
    <property type="method" value="X-ray"/>
    <property type="resolution" value="1.30 A"/>
    <property type="chains" value="A=74-219"/>
</dbReference>
<dbReference type="PDB" id="3WH3">
    <property type="method" value="X-ray"/>
    <property type="resolution" value="1.32 A"/>
    <property type="chains" value="A=74-219"/>
</dbReference>
<dbReference type="PDBsum" id="3WH2"/>
<dbReference type="PDBsum" id="3WH3"/>
<dbReference type="SMR" id="Q9ULY5"/>
<dbReference type="BioGRID" id="117639">
    <property type="interactions" value="365"/>
</dbReference>
<dbReference type="CORUM" id="Q9ULY5"/>
<dbReference type="FunCoup" id="Q9ULY5">
    <property type="interactions" value="271"/>
</dbReference>
<dbReference type="IntAct" id="Q9ULY5">
    <property type="interactions" value="71"/>
</dbReference>
<dbReference type="STRING" id="9606.ENSP00000299663"/>
<dbReference type="ChEMBL" id="CHEMBL4105898"/>
<dbReference type="DrugBank" id="DB04540">
    <property type="generic name" value="Cholesterol"/>
</dbReference>
<dbReference type="GuidetoPHARMACOLOGY" id="2929"/>
<dbReference type="UniLectin" id="Q9ULY5"/>
<dbReference type="GlyCosmos" id="Q9ULY5">
    <property type="glycosylation" value="2 sites, No reported glycans"/>
</dbReference>
<dbReference type="GlyGen" id="Q9ULY5">
    <property type="glycosylation" value="2 sites"/>
</dbReference>
<dbReference type="iPTMnet" id="Q9ULY5"/>
<dbReference type="PhosphoSitePlus" id="Q9ULY5"/>
<dbReference type="BioMuta" id="CLEC4E"/>
<dbReference type="DMDM" id="59797976"/>
<dbReference type="MassIVE" id="Q9ULY5"/>
<dbReference type="PaxDb" id="9606-ENSP00000299663"/>
<dbReference type="PeptideAtlas" id="Q9ULY5"/>
<dbReference type="ProteomicsDB" id="85152"/>
<dbReference type="Antibodypedia" id="23066">
    <property type="antibodies" value="320 antibodies from 28 providers"/>
</dbReference>
<dbReference type="DNASU" id="26253"/>
<dbReference type="Ensembl" id="ENST00000299663.8">
    <property type="protein sequence ID" value="ENSP00000299663.3"/>
    <property type="gene ID" value="ENSG00000166523.8"/>
</dbReference>
<dbReference type="GeneID" id="26253"/>
<dbReference type="KEGG" id="hsa:26253"/>
<dbReference type="MANE-Select" id="ENST00000299663.8">
    <property type="protein sequence ID" value="ENSP00000299663.3"/>
    <property type="RefSeq nucleotide sequence ID" value="NM_014358.4"/>
    <property type="RefSeq protein sequence ID" value="NP_055173.1"/>
</dbReference>
<dbReference type="UCSC" id="uc001quo.2">
    <property type="organism name" value="human"/>
</dbReference>
<dbReference type="AGR" id="HGNC:14555"/>
<dbReference type="CTD" id="26253"/>
<dbReference type="DisGeNET" id="26253"/>
<dbReference type="GeneCards" id="CLEC4E"/>
<dbReference type="HGNC" id="HGNC:14555">
    <property type="gene designation" value="CLEC4E"/>
</dbReference>
<dbReference type="HPA" id="ENSG00000166523">
    <property type="expression patterns" value="Tissue enhanced (bone marrow, lymphoid tissue)"/>
</dbReference>
<dbReference type="MIM" id="609962">
    <property type="type" value="gene"/>
</dbReference>
<dbReference type="neXtProt" id="NX_Q9ULY5"/>
<dbReference type="OpenTargets" id="ENSG00000166523"/>
<dbReference type="PharmGKB" id="PA26586"/>
<dbReference type="VEuPathDB" id="HostDB:ENSG00000166523"/>
<dbReference type="eggNOG" id="KOG4297">
    <property type="taxonomic scope" value="Eukaryota"/>
</dbReference>
<dbReference type="GeneTree" id="ENSGT00940000160666"/>
<dbReference type="HOGENOM" id="CLU_049894_7_5_1"/>
<dbReference type="InParanoid" id="Q9ULY5"/>
<dbReference type="OMA" id="CPLNWEH"/>
<dbReference type="OrthoDB" id="6337382at2759"/>
<dbReference type="PAN-GO" id="Q9ULY5">
    <property type="GO annotations" value="3 GO annotations based on evolutionary models"/>
</dbReference>
<dbReference type="PhylomeDB" id="Q9ULY5"/>
<dbReference type="TreeFam" id="TF333341"/>
<dbReference type="PathwayCommons" id="Q9ULY5"/>
<dbReference type="Reactome" id="R-HSA-5621480">
    <property type="pathway name" value="Dectin-2 family"/>
</dbReference>
<dbReference type="SignaLink" id="Q9ULY5"/>
<dbReference type="BioGRID-ORCS" id="26253">
    <property type="hits" value="10 hits in 1138 CRISPR screens"/>
</dbReference>
<dbReference type="EvolutionaryTrace" id="Q9ULY5"/>
<dbReference type="GenomeRNAi" id="26253"/>
<dbReference type="Pharos" id="Q9ULY5">
    <property type="development level" value="Tchem"/>
</dbReference>
<dbReference type="PRO" id="PR:Q9ULY5"/>
<dbReference type="Proteomes" id="UP000005640">
    <property type="component" value="Chromosome 12"/>
</dbReference>
<dbReference type="RNAct" id="Q9ULY5">
    <property type="molecule type" value="protein"/>
</dbReference>
<dbReference type="Bgee" id="ENSG00000166523">
    <property type="expression patterns" value="Expressed in monocyte and 116 other cell types or tissues"/>
</dbReference>
<dbReference type="ExpressionAtlas" id="Q9ULY5">
    <property type="expression patterns" value="baseline and differential"/>
</dbReference>
<dbReference type="GO" id="GO:0042995">
    <property type="term" value="C:cell projection"/>
    <property type="evidence" value="ECO:0007669"/>
    <property type="project" value="UniProtKB-KW"/>
</dbReference>
<dbReference type="GO" id="GO:0009897">
    <property type="term" value="C:external side of plasma membrane"/>
    <property type="evidence" value="ECO:0000318"/>
    <property type="project" value="GO_Central"/>
</dbReference>
<dbReference type="GO" id="GO:0016020">
    <property type="term" value="C:membrane"/>
    <property type="evidence" value="ECO:0000314"/>
    <property type="project" value="UniProtKB"/>
</dbReference>
<dbReference type="GO" id="GO:0001891">
    <property type="term" value="C:phagocytic cup"/>
    <property type="evidence" value="ECO:0007669"/>
    <property type="project" value="UniProtKB-SubCell"/>
</dbReference>
<dbReference type="GO" id="GO:0030670">
    <property type="term" value="C:phagocytic vesicle membrane"/>
    <property type="evidence" value="ECO:0000250"/>
    <property type="project" value="UniProtKB"/>
</dbReference>
<dbReference type="GO" id="GO:0005886">
    <property type="term" value="C:plasma membrane"/>
    <property type="evidence" value="ECO:0000250"/>
    <property type="project" value="UniProtKB"/>
</dbReference>
<dbReference type="GO" id="GO:0005509">
    <property type="term" value="F:calcium ion binding"/>
    <property type="evidence" value="ECO:0000314"/>
    <property type="project" value="UniProtKB"/>
</dbReference>
<dbReference type="GO" id="GO:0030246">
    <property type="term" value="F:carbohydrate binding"/>
    <property type="evidence" value="ECO:0000318"/>
    <property type="project" value="GO_Central"/>
</dbReference>
<dbReference type="GO" id="GO:0051861">
    <property type="term" value="F:glycolipid binding"/>
    <property type="evidence" value="ECO:0000250"/>
    <property type="project" value="UniProtKB"/>
</dbReference>
<dbReference type="GO" id="GO:0038187">
    <property type="term" value="F:pattern recognition receptor activity"/>
    <property type="evidence" value="ECO:0000314"/>
    <property type="project" value="UniProtKB"/>
</dbReference>
<dbReference type="GO" id="GO:0061760">
    <property type="term" value="P:antifungal innate immune response"/>
    <property type="evidence" value="ECO:0000250"/>
    <property type="project" value="UniProtKB"/>
</dbReference>
<dbReference type="GO" id="GO:0042742">
    <property type="term" value="P:defense response to bacterium"/>
    <property type="evidence" value="ECO:0007669"/>
    <property type="project" value="Ensembl"/>
</dbReference>
<dbReference type="GO" id="GO:0038094">
    <property type="term" value="P:Fc-gamma receptor signaling pathway"/>
    <property type="evidence" value="ECO:0007669"/>
    <property type="project" value="Ensembl"/>
</dbReference>
<dbReference type="GO" id="GO:0045087">
    <property type="term" value="P:innate immune response"/>
    <property type="evidence" value="ECO:0000250"/>
    <property type="project" value="UniProtKB"/>
</dbReference>
<dbReference type="GO" id="GO:0002221">
    <property type="term" value="P:pattern recognition receptor signaling pathway"/>
    <property type="evidence" value="ECO:0000315"/>
    <property type="project" value="UniProtKB"/>
</dbReference>
<dbReference type="GO" id="GO:0001819">
    <property type="term" value="P:positive regulation of cytokine production"/>
    <property type="evidence" value="ECO:0007669"/>
    <property type="project" value="Ensembl"/>
</dbReference>
<dbReference type="GO" id="GO:0002292">
    <property type="term" value="P:T cell differentiation involved in immune response"/>
    <property type="evidence" value="ECO:0007669"/>
    <property type="project" value="Ensembl"/>
</dbReference>
<dbReference type="CDD" id="cd03590">
    <property type="entry name" value="CLECT_DC-SIGN_like"/>
    <property type="match status" value="1"/>
</dbReference>
<dbReference type="FunFam" id="3.10.100.10:FF:000118">
    <property type="entry name" value="C-type lectin domain family 4 member E"/>
    <property type="match status" value="1"/>
</dbReference>
<dbReference type="Gene3D" id="3.10.100.10">
    <property type="entry name" value="Mannose-Binding Protein A, subunit A"/>
    <property type="match status" value="1"/>
</dbReference>
<dbReference type="InterPro" id="IPR001304">
    <property type="entry name" value="C-type_lectin-like"/>
</dbReference>
<dbReference type="InterPro" id="IPR016186">
    <property type="entry name" value="C-type_lectin-like/link_sf"/>
</dbReference>
<dbReference type="InterPro" id="IPR050111">
    <property type="entry name" value="C-type_lectin/snaclec_domain"/>
</dbReference>
<dbReference type="InterPro" id="IPR033989">
    <property type="entry name" value="CD209-like_CTLD"/>
</dbReference>
<dbReference type="InterPro" id="IPR016187">
    <property type="entry name" value="CTDL_fold"/>
</dbReference>
<dbReference type="PANTHER" id="PTHR22803">
    <property type="entry name" value="MANNOSE, PHOSPHOLIPASE, LECTIN RECEPTOR RELATED"/>
    <property type="match status" value="1"/>
</dbReference>
<dbReference type="Pfam" id="PF00059">
    <property type="entry name" value="Lectin_C"/>
    <property type="match status" value="1"/>
</dbReference>
<dbReference type="SMART" id="SM00034">
    <property type="entry name" value="CLECT"/>
    <property type="match status" value="1"/>
</dbReference>
<dbReference type="SUPFAM" id="SSF56436">
    <property type="entry name" value="C-type lectin-like"/>
    <property type="match status" value="1"/>
</dbReference>
<dbReference type="PROSITE" id="PS50041">
    <property type="entry name" value="C_TYPE_LECTIN_2"/>
    <property type="match status" value="1"/>
</dbReference>
<reference key="1">
    <citation type="journal article" date="1999" name="J. Immunol.">
        <title>A novel LPS-inducible C-type lectin is a transcriptional target of NF-IL6 in macrophages.</title>
        <authorList>
            <person name="Matsumoto M."/>
            <person name="Shimada T."/>
            <person name="Kaisho T."/>
            <person name="Sanjo H."/>
            <person name="Tanaka T."/>
            <person name="Copeland N.G."/>
            <person name="Gilbert D.J."/>
            <person name="Jenkins N.A."/>
            <person name="Akira S."/>
        </authorList>
    </citation>
    <scope>NUCLEOTIDE SEQUENCE [MRNA]</scope>
    <source>
        <tissue>Monocytic leukemia</tissue>
    </source>
</reference>
<reference key="2">
    <citation type="journal article" date="2003" name="Genome Res.">
        <title>The secreted protein discovery initiative (SPDI), a large-scale effort to identify novel human secreted and transmembrane proteins: a bioinformatics assessment.</title>
        <authorList>
            <person name="Clark H.F."/>
            <person name="Gurney A.L."/>
            <person name="Abaya E."/>
            <person name="Baker K."/>
            <person name="Baldwin D.T."/>
            <person name="Brush J."/>
            <person name="Chen J."/>
            <person name="Chow B."/>
            <person name="Chui C."/>
            <person name="Crowley C."/>
            <person name="Currell B."/>
            <person name="Deuel B."/>
            <person name="Dowd P."/>
            <person name="Eaton D."/>
            <person name="Foster J.S."/>
            <person name="Grimaldi C."/>
            <person name="Gu Q."/>
            <person name="Hass P.E."/>
            <person name="Heldens S."/>
            <person name="Huang A."/>
            <person name="Kim H.S."/>
            <person name="Klimowski L."/>
            <person name="Jin Y."/>
            <person name="Johnson S."/>
            <person name="Lee J."/>
            <person name="Lewis L."/>
            <person name="Liao D."/>
            <person name="Mark M.R."/>
            <person name="Robbie E."/>
            <person name="Sanchez C."/>
            <person name="Schoenfeld J."/>
            <person name="Seshagiri S."/>
            <person name="Simmons L."/>
            <person name="Singh J."/>
            <person name="Smith V."/>
            <person name="Stinson J."/>
            <person name="Vagts A."/>
            <person name="Vandlen R.L."/>
            <person name="Watanabe C."/>
            <person name="Wieand D."/>
            <person name="Woods K."/>
            <person name="Xie M.-H."/>
            <person name="Yansura D.G."/>
            <person name="Yi S."/>
            <person name="Yu G."/>
            <person name="Yuan J."/>
            <person name="Zhang M."/>
            <person name="Zhang Z."/>
            <person name="Goddard A.D."/>
            <person name="Wood W.I."/>
            <person name="Godowski P.J."/>
            <person name="Gray A.M."/>
        </authorList>
    </citation>
    <scope>NUCLEOTIDE SEQUENCE [LARGE SCALE MRNA]</scope>
</reference>
<reference key="3">
    <citation type="journal article" date="2004" name="Nat. Genet.">
        <title>Complete sequencing and characterization of 21,243 full-length human cDNAs.</title>
        <authorList>
            <person name="Ota T."/>
            <person name="Suzuki Y."/>
            <person name="Nishikawa T."/>
            <person name="Otsuki T."/>
            <person name="Sugiyama T."/>
            <person name="Irie R."/>
            <person name="Wakamatsu A."/>
            <person name="Hayashi K."/>
            <person name="Sato H."/>
            <person name="Nagai K."/>
            <person name="Kimura K."/>
            <person name="Makita H."/>
            <person name="Sekine M."/>
            <person name="Obayashi M."/>
            <person name="Nishi T."/>
            <person name="Shibahara T."/>
            <person name="Tanaka T."/>
            <person name="Ishii S."/>
            <person name="Yamamoto J."/>
            <person name="Saito K."/>
            <person name="Kawai Y."/>
            <person name="Isono Y."/>
            <person name="Nakamura Y."/>
            <person name="Nagahari K."/>
            <person name="Murakami K."/>
            <person name="Yasuda T."/>
            <person name="Iwayanagi T."/>
            <person name="Wagatsuma M."/>
            <person name="Shiratori A."/>
            <person name="Sudo H."/>
            <person name="Hosoiri T."/>
            <person name="Kaku Y."/>
            <person name="Kodaira H."/>
            <person name="Kondo H."/>
            <person name="Sugawara M."/>
            <person name="Takahashi M."/>
            <person name="Kanda K."/>
            <person name="Yokoi T."/>
            <person name="Furuya T."/>
            <person name="Kikkawa E."/>
            <person name="Omura Y."/>
            <person name="Abe K."/>
            <person name="Kamihara K."/>
            <person name="Katsuta N."/>
            <person name="Sato K."/>
            <person name="Tanikawa M."/>
            <person name="Yamazaki M."/>
            <person name="Ninomiya K."/>
            <person name="Ishibashi T."/>
            <person name="Yamashita H."/>
            <person name="Murakawa K."/>
            <person name="Fujimori K."/>
            <person name="Tanai H."/>
            <person name="Kimata M."/>
            <person name="Watanabe M."/>
            <person name="Hiraoka S."/>
            <person name="Chiba Y."/>
            <person name="Ishida S."/>
            <person name="Ono Y."/>
            <person name="Takiguchi S."/>
            <person name="Watanabe S."/>
            <person name="Yosida M."/>
            <person name="Hotuta T."/>
            <person name="Kusano J."/>
            <person name="Kanehori K."/>
            <person name="Takahashi-Fujii A."/>
            <person name="Hara H."/>
            <person name="Tanase T.-O."/>
            <person name="Nomura Y."/>
            <person name="Togiya S."/>
            <person name="Komai F."/>
            <person name="Hara R."/>
            <person name="Takeuchi K."/>
            <person name="Arita M."/>
            <person name="Imose N."/>
            <person name="Musashino K."/>
            <person name="Yuuki H."/>
            <person name="Oshima A."/>
            <person name="Sasaki N."/>
            <person name="Aotsuka S."/>
            <person name="Yoshikawa Y."/>
            <person name="Matsunawa H."/>
            <person name="Ichihara T."/>
            <person name="Shiohata N."/>
            <person name="Sano S."/>
            <person name="Moriya S."/>
            <person name="Momiyama H."/>
            <person name="Satoh N."/>
            <person name="Takami S."/>
            <person name="Terashima Y."/>
            <person name="Suzuki O."/>
            <person name="Nakagawa S."/>
            <person name="Senoh A."/>
            <person name="Mizoguchi H."/>
            <person name="Goto Y."/>
            <person name="Shimizu F."/>
            <person name="Wakebe H."/>
            <person name="Hishigaki H."/>
            <person name="Watanabe T."/>
            <person name="Sugiyama A."/>
            <person name="Takemoto M."/>
            <person name="Kawakami B."/>
            <person name="Yamazaki M."/>
            <person name="Watanabe K."/>
            <person name="Kumagai A."/>
            <person name="Itakura S."/>
            <person name="Fukuzumi Y."/>
            <person name="Fujimori Y."/>
            <person name="Komiyama M."/>
            <person name="Tashiro H."/>
            <person name="Tanigami A."/>
            <person name="Fujiwara T."/>
            <person name="Ono T."/>
            <person name="Yamada K."/>
            <person name="Fujii Y."/>
            <person name="Ozaki K."/>
            <person name="Hirao M."/>
            <person name="Ohmori Y."/>
            <person name="Kawabata A."/>
            <person name="Hikiji T."/>
            <person name="Kobatake N."/>
            <person name="Inagaki H."/>
            <person name="Ikema Y."/>
            <person name="Okamoto S."/>
            <person name="Okitani R."/>
            <person name="Kawakami T."/>
            <person name="Noguchi S."/>
            <person name="Itoh T."/>
            <person name="Shigeta K."/>
            <person name="Senba T."/>
            <person name="Matsumura K."/>
            <person name="Nakajima Y."/>
            <person name="Mizuno T."/>
            <person name="Morinaga M."/>
            <person name="Sasaki M."/>
            <person name="Togashi T."/>
            <person name="Oyama M."/>
            <person name="Hata H."/>
            <person name="Watanabe M."/>
            <person name="Komatsu T."/>
            <person name="Mizushima-Sugano J."/>
            <person name="Satoh T."/>
            <person name="Shirai Y."/>
            <person name="Takahashi Y."/>
            <person name="Nakagawa K."/>
            <person name="Okumura K."/>
            <person name="Nagase T."/>
            <person name="Nomura N."/>
            <person name="Kikuchi H."/>
            <person name="Masuho Y."/>
            <person name="Yamashita R."/>
            <person name="Nakai K."/>
            <person name="Yada T."/>
            <person name="Nakamura Y."/>
            <person name="Ohara O."/>
            <person name="Isogai T."/>
            <person name="Sugano S."/>
        </authorList>
    </citation>
    <scope>NUCLEOTIDE SEQUENCE [LARGE SCALE MRNA]</scope>
</reference>
<reference key="4">
    <citation type="journal article" date="2006" name="Nature">
        <title>The finished DNA sequence of human chromosome 12.</title>
        <authorList>
            <person name="Scherer S.E."/>
            <person name="Muzny D.M."/>
            <person name="Buhay C.J."/>
            <person name="Chen R."/>
            <person name="Cree A."/>
            <person name="Ding Y."/>
            <person name="Dugan-Rocha S."/>
            <person name="Gill R."/>
            <person name="Gunaratne P."/>
            <person name="Harris R.A."/>
            <person name="Hawes A.C."/>
            <person name="Hernandez J."/>
            <person name="Hodgson A.V."/>
            <person name="Hume J."/>
            <person name="Jackson A."/>
            <person name="Khan Z.M."/>
            <person name="Kovar-Smith C."/>
            <person name="Lewis L.R."/>
            <person name="Lozado R.J."/>
            <person name="Metzker M.L."/>
            <person name="Milosavljevic A."/>
            <person name="Miner G.R."/>
            <person name="Montgomery K.T."/>
            <person name="Morgan M.B."/>
            <person name="Nazareth L.V."/>
            <person name="Scott G."/>
            <person name="Sodergren E."/>
            <person name="Song X.-Z."/>
            <person name="Steffen D."/>
            <person name="Lovering R.C."/>
            <person name="Wheeler D.A."/>
            <person name="Worley K.C."/>
            <person name="Yuan Y."/>
            <person name="Zhang Z."/>
            <person name="Adams C.Q."/>
            <person name="Ansari-Lari M.A."/>
            <person name="Ayele M."/>
            <person name="Brown M.J."/>
            <person name="Chen G."/>
            <person name="Chen Z."/>
            <person name="Clerc-Blankenburg K.P."/>
            <person name="Davis C."/>
            <person name="Delgado O."/>
            <person name="Dinh H.H."/>
            <person name="Draper H."/>
            <person name="Gonzalez-Garay M.L."/>
            <person name="Havlak P."/>
            <person name="Jackson L.R."/>
            <person name="Jacob L.S."/>
            <person name="Kelly S.H."/>
            <person name="Li L."/>
            <person name="Li Z."/>
            <person name="Liu J."/>
            <person name="Liu W."/>
            <person name="Lu J."/>
            <person name="Maheshwari M."/>
            <person name="Nguyen B.-V."/>
            <person name="Okwuonu G.O."/>
            <person name="Pasternak S."/>
            <person name="Perez L.M."/>
            <person name="Plopper F.J.H."/>
            <person name="Santibanez J."/>
            <person name="Shen H."/>
            <person name="Tabor P.E."/>
            <person name="Verduzco D."/>
            <person name="Waldron L."/>
            <person name="Wang Q."/>
            <person name="Williams G.A."/>
            <person name="Zhang J."/>
            <person name="Zhou J."/>
            <person name="Allen C.C."/>
            <person name="Amin A.G."/>
            <person name="Anyalebechi V."/>
            <person name="Bailey M."/>
            <person name="Barbaria J.A."/>
            <person name="Bimage K.E."/>
            <person name="Bryant N.P."/>
            <person name="Burch P.E."/>
            <person name="Burkett C.E."/>
            <person name="Burrell K.L."/>
            <person name="Calderon E."/>
            <person name="Cardenas V."/>
            <person name="Carter K."/>
            <person name="Casias K."/>
            <person name="Cavazos I."/>
            <person name="Cavazos S.R."/>
            <person name="Ceasar H."/>
            <person name="Chacko J."/>
            <person name="Chan S.N."/>
            <person name="Chavez D."/>
            <person name="Christopoulos C."/>
            <person name="Chu J."/>
            <person name="Cockrell R."/>
            <person name="Cox C.D."/>
            <person name="Dang M."/>
            <person name="Dathorne S.R."/>
            <person name="David R."/>
            <person name="Davis C.M."/>
            <person name="Davy-Carroll L."/>
            <person name="Deshazo D.R."/>
            <person name="Donlin J.E."/>
            <person name="D'Souza L."/>
            <person name="Eaves K.A."/>
            <person name="Egan A."/>
            <person name="Emery-Cohen A.J."/>
            <person name="Escotto M."/>
            <person name="Flagg N."/>
            <person name="Forbes L.D."/>
            <person name="Gabisi A.M."/>
            <person name="Garza M."/>
            <person name="Hamilton C."/>
            <person name="Henderson N."/>
            <person name="Hernandez O."/>
            <person name="Hines S."/>
            <person name="Hogues M.E."/>
            <person name="Huang M."/>
            <person name="Idlebird D.G."/>
            <person name="Johnson R."/>
            <person name="Jolivet A."/>
            <person name="Jones S."/>
            <person name="Kagan R."/>
            <person name="King L.M."/>
            <person name="Leal B."/>
            <person name="Lebow H."/>
            <person name="Lee S."/>
            <person name="LeVan J.M."/>
            <person name="Lewis L.C."/>
            <person name="London P."/>
            <person name="Lorensuhewa L.M."/>
            <person name="Loulseged H."/>
            <person name="Lovett D.A."/>
            <person name="Lucier A."/>
            <person name="Lucier R.L."/>
            <person name="Ma J."/>
            <person name="Madu R.C."/>
            <person name="Mapua P."/>
            <person name="Martindale A.D."/>
            <person name="Martinez E."/>
            <person name="Massey E."/>
            <person name="Mawhiney S."/>
            <person name="Meador M.G."/>
            <person name="Mendez S."/>
            <person name="Mercado C."/>
            <person name="Mercado I.C."/>
            <person name="Merritt C.E."/>
            <person name="Miner Z.L."/>
            <person name="Minja E."/>
            <person name="Mitchell T."/>
            <person name="Mohabbat F."/>
            <person name="Mohabbat K."/>
            <person name="Montgomery B."/>
            <person name="Moore N."/>
            <person name="Morris S."/>
            <person name="Munidasa M."/>
            <person name="Ngo R.N."/>
            <person name="Nguyen N.B."/>
            <person name="Nickerson E."/>
            <person name="Nwaokelemeh O.O."/>
            <person name="Nwokenkwo S."/>
            <person name="Obregon M."/>
            <person name="Oguh M."/>
            <person name="Oragunye N."/>
            <person name="Oviedo R.J."/>
            <person name="Parish B.J."/>
            <person name="Parker D.N."/>
            <person name="Parrish J."/>
            <person name="Parks K.L."/>
            <person name="Paul H.A."/>
            <person name="Payton B.A."/>
            <person name="Perez A."/>
            <person name="Perrin W."/>
            <person name="Pickens A."/>
            <person name="Primus E.L."/>
            <person name="Pu L.-L."/>
            <person name="Puazo M."/>
            <person name="Quiles M.M."/>
            <person name="Quiroz J.B."/>
            <person name="Rabata D."/>
            <person name="Reeves K."/>
            <person name="Ruiz S.J."/>
            <person name="Shao H."/>
            <person name="Sisson I."/>
            <person name="Sonaike T."/>
            <person name="Sorelle R.P."/>
            <person name="Sutton A.E."/>
            <person name="Svatek A.F."/>
            <person name="Svetz L.A."/>
            <person name="Tamerisa K.S."/>
            <person name="Taylor T.R."/>
            <person name="Teague B."/>
            <person name="Thomas N."/>
            <person name="Thorn R.D."/>
            <person name="Trejos Z.Y."/>
            <person name="Trevino B.K."/>
            <person name="Ukegbu O.N."/>
            <person name="Urban J.B."/>
            <person name="Vasquez L.I."/>
            <person name="Vera V.A."/>
            <person name="Villasana D.M."/>
            <person name="Wang L."/>
            <person name="Ward-Moore S."/>
            <person name="Warren J.T."/>
            <person name="Wei X."/>
            <person name="White F."/>
            <person name="Williamson A.L."/>
            <person name="Wleczyk R."/>
            <person name="Wooden H.S."/>
            <person name="Wooden S.H."/>
            <person name="Yen J."/>
            <person name="Yoon L."/>
            <person name="Yoon V."/>
            <person name="Zorrilla S.E."/>
            <person name="Nelson D."/>
            <person name="Kucherlapati R."/>
            <person name="Weinstock G."/>
            <person name="Gibbs R.A."/>
        </authorList>
    </citation>
    <scope>NUCLEOTIDE SEQUENCE [LARGE SCALE GENOMIC DNA]</scope>
</reference>
<reference key="5">
    <citation type="submission" date="2005-09" db="EMBL/GenBank/DDBJ databases">
        <authorList>
            <person name="Mural R.J."/>
            <person name="Istrail S."/>
            <person name="Sutton G.G."/>
            <person name="Florea L."/>
            <person name="Halpern A.L."/>
            <person name="Mobarry C.M."/>
            <person name="Lippert R."/>
            <person name="Walenz B."/>
            <person name="Shatkay H."/>
            <person name="Dew I."/>
            <person name="Miller J.R."/>
            <person name="Flanigan M.J."/>
            <person name="Edwards N.J."/>
            <person name="Bolanos R."/>
            <person name="Fasulo D."/>
            <person name="Halldorsson B.V."/>
            <person name="Hannenhalli S."/>
            <person name="Turner R."/>
            <person name="Yooseph S."/>
            <person name="Lu F."/>
            <person name="Nusskern D.R."/>
            <person name="Shue B.C."/>
            <person name="Zheng X.H."/>
            <person name="Zhong F."/>
            <person name="Delcher A.L."/>
            <person name="Huson D.H."/>
            <person name="Kravitz S.A."/>
            <person name="Mouchard L."/>
            <person name="Reinert K."/>
            <person name="Remington K.A."/>
            <person name="Clark A.G."/>
            <person name="Waterman M.S."/>
            <person name="Eichler E.E."/>
            <person name="Adams M.D."/>
            <person name="Hunkapiller M.W."/>
            <person name="Myers E.W."/>
            <person name="Venter J.C."/>
        </authorList>
    </citation>
    <scope>NUCLEOTIDE SEQUENCE [LARGE SCALE GENOMIC DNA]</scope>
</reference>
<reference key="6">
    <citation type="journal article" date="2004" name="Genome Res.">
        <title>The status, quality, and expansion of the NIH full-length cDNA project: the Mammalian Gene Collection (MGC).</title>
        <authorList>
            <consortium name="The MGC Project Team"/>
        </authorList>
    </citation>
    <scope>NUCLEOTIDE SEQUENCE [LARGE SCALE MRNA]</scope>
    <source>
        <tissue>Kidney</tissue>
    </source>
</reference>
<reference key="7">
    <citation type="journal article" date="2008" name="Glycobiology">
        <title>Human and mouse macrophage-inducible C-type lectin (Mincle) bind Candida albicans.</title>
        <authorList>
            <person name="Bugarcic A."/>
            <person name="Hitchens K."/>
            <person name="Beckhouse A.G."/>
            <person name="Wells C.A."/>
            <person name="Ashman R.B."/>
            <person name="Blanchard H."/>
        </authorList>
    </citation>
    <scope>FUNCTION AS RECEPTOR FOR CANDIDA ALBICANS</scope>
    <scope>SUBUNIT</scope>
</reference>
<reference key="8">
    <citation type="journal article" date="2008" name="J. Immunol.">
        <title>The macrophage-inducible C-type lectin, mincle, is an essential component of the innate immune response to Candida albicans.</title>
        <authorList>
            <person name="Wells C.A."/>
            <person name="Salvage-Jones J.A."/>
            <person name="Li X."/>
            <person name="Hitchens K."/>
            <person name="Butcher S."/>
            <person name="Murray R.Z."/>
            <person name="Beckhouse A.G."/>
            <person name="Lo Y.L."/>
            <person name="Manzanero S."/>
            <person name="Cobbold C."/>
            <person name="Schroder K."/>
            <person name="Ma B."/>
            <person name="Orr S."/>
            <person name="Stewart L."/>
            <person name="Lebus D."/>
            <person name="Sobieszczuk P."/>
            <person name="Hume D.A."/>
            <person name="Stow J."/>
            <person name="Blanchard H."/>
            <person name="Ashman R.B."/>
        </authorList>
    </citation>
    <scope>SUBCELLULAR LOCATION</scope>
</reference>
<reference key="9">
    <citation type="journal article" date="2008" name="Nat. Immunol.">
        <title>Mincle is an ITAM-coupled activating receptor that senses damaged cells.</title>
        <authorList>
            <person name="Yamasaki S."/>
            <person name="Ishikawa E."/>
            <person name="Sakuma M."/>
            <person name="Hara H."/>
            <person name="Ogata K."/>
            <person name="Saito T."/>
        </authorList>
    </citation>
    <scope>INTERACTION WITH FCER1G</scope>
</reference>
<reference key="10">
    <citation type="journal article" date="2013" name="Immunity">
        <title>C-type lectin MCL is an FcRgamma-coupled receptor that mediates the adjuvanticity of mycobacterial cord factor.</title>
        <authorList>
            <person name="Miyake Y."/>
            <person name="Toyonaga K."/>
            <person name="Mori D."/>
            <person name="Kakuta S."/>
            <person name="Hoshino Y."/>
            <person name="Oyamada A."/>
            <person name="Yamada H."/>
            <person name="Ono K."/>
            <person name="Suyama M."/>
            <person name="Iwakura Y."/>
            <person name="Yoshikai Y."/>
            <person name="Yamasaki S."/>
        </authorList>
    </citation>
    <scope>FUNCTION</scope>
    <scope>TISSUE SPECIFICITY</scope>
</reference>
<reference key="11">
    <citation type="journal article" date="2013" name="Proc. Natl. Acad. Sci. U.S.A.">
        <title>Structural analysis for glycolipid recognition by the C-type lectins Mincle and MCL.</title>
        <authorList>
            <person name="Furukawa A."/>
            <person name="Kamishikiryo J."/>
            <person name="Mori D."/>
            <person name="Toyonaga K."/>
            <person name="Okabe Y."/>
            <person name="Toji A."/>
            <person name="Kanda R."/>
            <person name="Miyake Y."/>
            <person name="Ose T."/>
            <person name="Yamasaki S."/>
            <person name="Maenaka K."/>
        </authorList>
    </citation>
    <scope>X-RAY CRYSTALLOGRAPHY (1.30 ANGSTROMS) OF 74-219 IN COMPLEX WITH CALCIUM</scope>
    <scope>FUNCTION</scope>
    <scope>MUTAGENESIS OF 169-GLU--ASN-171; ASN-172; ARG-183 AND 198-PHE-LEU-199</scope>
    <scope>SUBCELLULAR LOCATION</scope>
    <scope>MOTIF</scope>
</reference>
<protein>
    <recommendedName>
        <fullName>C-type lectin domain family 4 member E</fullName>
    </recommendedName>
    <alternativeName>
        <fullName>C-type lectin superfamily member 9</fullName>
    </alternativeName>
    <alternativeName>
        <fullName evidence="9">Macrophage-inducible C-type lectin</fullName>
        <shortName evidence="9">MINCLE</shortName>
    </alternativeName>
</protein>
<organism>
    <name type="scientific">Homo sapiens</name>
    <name type="common">Human</name>
    <dbReference type="NCBI Taxonomy" id="9606"/>
    <lineage>
        <taxon>Eukaryota</taxon>
        <taxon>Metazoa</taxon>
        <taxon>Chordata</taxon>
        <taxon>Craniata</taxon>
        <taxon>Vertebrata</taxon>
        <taxon>Euteleostomi</taxon>
        <taxon>Mammalia</taxon>
        <taxon>Eutheria</taxon>
        <taxon>Euarchontoglires</taxon>
        <taxon>Primates</taxon>
        <taxon>Haplorrhini</taxon>
        <taxon>Catarrhini</taxon>
        <taxon>Hominidae</taxon>
        <taxon>Homo</taxon>
    </lineage>
</organism>
<gene>
    <name evidence="9 12" type="primary">CLEC4E</name>
    <name type="synonym">CLECSF9</name>
    <name evidence="9" type="synonym">MINCLE</name>
    <name type="ORF">UNQ218/PRO244</name>
</gene>
<comment type="function">
    <text evidence="2 6 7 8">Calcium-dependent lectin that acts as a pattern recognition receptor (PRR) of the innate immune system: recognizes damage-associated molecular patterns (DAMPs) of abnormal self and pathogen-associated molecular patterns (PAMPs) of bacteria and fungi (PubMed:18509109, PubMed:23602766). The PAMPs notably include mycobacterial trehalose 6,6'-dimycolate (TDM), a cell wall glycolipid with potent adjuvant immunomodulatory functions (PubMed:23602766, PubMed:24101491). Interacts with signaling adapter Fc receptor gamma chain/FCER1G to form a functional complex in myeloid cells (By similarity). Binding of mycobacterial trehalose 6,6'-dimycolate (TDM) to this receptor complex leads to phosphorylation of the immunoreceptor tyrosine-based activation motif (ITAM) of FCER1G, triggering activation of SYK, CARD9 and NF-kappa-B, consequently driving maturation of antigen-presenting cells and shaping antigen-specific priming of T-cells toward effector T-helper 1 and T-helper 17 cell subtypes (By similarity). Also recognizes alpha-mannose residues on pathogenic fungi of the genus Malassezia and mediates macrophage activation (By similarity). Through recognition of DAMPs released upon nonhomeostatic cell death, enables immune sensing of damaged self and promotes inflammatory cell infiltration into the damaged tissue (By similarity).</text>
</comment>
<comment type="subunit">
    <text evidence="1 2 6">Monomer and homodimer (PubMed:18509109). Interacts with signaling adapter Fc receptor gamma chain/FCER1G to form a functional complex; the interaction is direct (By similarity). Alternatively, acts as a bridge for interaction between CLEC4D and FCER1G. A heterodimer of CLEC4E and CLEC4D associates with FCER1G to form a functional complex (By similarity). Interacts with SAP130 nuclear protein that is released from necrotic cells; the interaction is direct (By similarity).</text>
</comment>
<comment type="interaction">
    <interactant intactId="EBI-12807010">
        <id>Q9ULY5</id>
    </interactant>
    <interactant intactId="EBI-3911467">
        <id>Q07325</id>
        <label>CXCL9</label>
    </interactant>
    <organismsDiffer>false</organismsDiffer>
    <experiments>3</experiments>
</comment>
<comment type="interaction">
    <interactant intactId="EBI-12807010">
        <id>Q9ULY5</id>
    </interactant>
    <interactant intactId="EBI-2876774">
        <id>Q92520</id>
        <label>FAM3C</label>
    </interactant>
    <organismsDiffer>false</organismsDiffer>
    <experiments>3</experiments>
</comment>
<comment type="interaction">
    <interactant intactId="EBI-12807010">
        <id>Q9ULY5</id>
    </interactant>
    <interactant intactId="EBI-3919611">
        <id>Q16617</id>
        <label>NKG7</label>
    </interactant>
    <organismsDiffer>false</organismsDiffer>
    <experiments>4</experiments>
</comment>
<comment type="subcellular location">
    <subcellularLocation>
        <location evidence="5 11">Cell membrane</location>
        <topology evidence="10">Single-pass type II membrane protein</topology>
    </subcellularLocation>
    <subcellularLocation>
        <location evidence="2">Cell projection</location>
        <location evidence="2">Phagocytic cup</location>
    </subcellularLocation>
</comment>
<comment type="tissue specificity">
    <text evidence="7">Expressed in monocytes and macrophages.</text>
</comment>
<comment type="online information" name="Functional Glycomics Gateway - Glycan Binding">
    <link uri="http://www.functionalglycomics.org/glycomics/GBPServlet?&amp;operationType=view&amp;cbpId=cbp_hum_Ctlect_00134"/>
    <text>Mincle</text>
</comment>
<evidence type="ECO:0000250" key="1">
    <source>
        <dbReference type="UniProtKB" id="Q67EQ1"/>
    </source>
</evidence>
<evidence type="ECO:0000250" key="2">
    <source>
        <dbReference type="UniProtKB" id="Q9R0Q8"/>
    </source>
</evidence>
<evidence type="ECO:0000255" key="3"/>
<evidence type="ECO:0000255" key="4">
    <source>
        <dbReference type="PROSITE-ProRule" id="PRU00040"/>
    </source>
</evidence>
<evidence type="ECO:0000269" key="5">
    <source>
    </source>
</evidence>
<evidence type="ECO:0000269" key="6">
    <source>
    </source>
</evidence>
<evidence type="ECO:0000269" key="7">
    <source>
    </source>
</evidence>
<evidence type="ECO:0000269" key="8">
    <source>
    </source>
</evidence>
<evidence type="ECO:0000303" key="9">
    <source>
    </source>
</evidence>
<evidence type="ECO:0000305" key="10"/>
<evidence type="ECO:0000305" key="11">
    <source>
    </source>
</evidence>
<evidence type="ECO:0000312" key="12">
    <source>
        <dbReference type="HGNC" id="HGNC:14555"/>
    </source>
</evidence>
<evidence type="ECO:0007829" key="13">
    <source>
        <dbReference type="PDB" id="3WH2"/>
    </source>
</evidence>
<feature type="chain" id="PRO_0000046619" description="C-type lectin domain family 4 member E">
    <location>
        <begin position="1"/>
        <end position="219"/>
    </location>
</feature>
<feature type="topological domain" description="Cytoplasmic" evidence="3">
    <location>
        <begin position="1"/>
        <end position="19"/>
    </location>
</feature>
<feature type="transmembrane region" description="Helical; Signal-anchor for type II membrane protein" evidence="3">
    <location>
        <begin position="20"/>
        <end position="40"/>
    </location>
</feature>
<feature type="topological domain" description="Extracellular" evidence="3">
    <location>
        <begin position="41"/>
        <end position="219"/>
    </location>
</feature>
<feature type="domain" description="C-type lectin" evidence="4">
    <location>
        <begin position="87"/>
        <end position="206"/>
    </location>
</feature>
<feature type="short sequence motif" description="Confers specificity for glucose/mannose-type carbohydrates" evidence="9">
    <location>
        <begin position="169"/>
        <end position="171"/>
    </location>
</feature>
<feature type="binding site" evidence="8">
    <location>
        <position position="117"/>
    </location>
    <ligand>
        <name>Ca(2+)</name>
        <dbReference type="ChEBI" id="CHEBI:29108"/>
        <label>1</label>
    </ligand>
</feature>
<feature type="binding site" evidence="8">
    <location>
        <position position="119"/>
    </location>
    <ligand>
        <name>Ca(2+)</name>
        <dbReference type="ChEBI" id="CHEBI:29108"/>
        <label>1</label>
    </ligand>
</feature>
<feature type="binding site" evidence="8">
    <location>
        <position position="123"/>
    </location>
    <ligand>
        <name>Ca(2+)</name>
        <dbReference type="ChEBI" id="CHEBI:29108"/>
        <label>1</label>
    </ligand>
</feature>
<feature type="binding site" evidence="8">
    <location>
        <position position="169"/>
    </location>
    <ligand>
        <name>Ca(2+)</name>
        <dbReference type="ChEBI" id="CHEBI:29108"/>
        <label>2</label>
    </ligand>
</feature>
<feature type="binding site" evidence="8">
    <location>
        <position position="171"/>
    </location>
    <ligand>
        <name>Ca(2+)</name>
        <dbReference type="ChEBI" id="CHEBI:29108"/>
        <label>2</label>
    </ligand>
</feature>
<feature type="binding site" evidence="8">
    <location>
        <position position="193"/>
    </location>
    <ligand>
        <name>Ca(2+)</name>
        <dbReference type="ChEBI" id="CHEBI:29108"/>
        <label>2</label>
    </ligand>
</feature>
<feature type="binding site" evidence="8">
    <location>
        <position position="194"/>
    </location>
    <ligand>
        <name>Ca(2+)</name>
        <dbReference type="ChEBI" id="CHEBI:29108"/>
        <label>2</label>
    </ligand>
</feature>
<feature type="binding site" evidence="8">
    <location>
        <position position="206"/>
    </location>
    <ligand>
        <name>Ca(2+)</name>
        <dbReference type="ChEBI" id="CHEBI:29108"/>
        <label>1</label>
    </ligand>
</feature>
<feature type="glycosylation site" description="N-linked (GlcNAc...) asparagine" evidence="3">
    <location>
        <position position="62"/>
    </location>
</feature>
<feature type="glycosylation site" description="N-linked (GlcNAc...) asparagine" evidence="3">
    <location>
        <position position="107"/>
    </location>
</feature>
<feature type="disulfide bond" evidence="4">
    <location>
        <begin position="80"/>
        <end position="91"/>
    </location>
</feature>
<feature type="disulfide bond" evidence="4">
    <location>
        <begin position="108"/>
        <end position="205"/>
    </location>
</feature>
<feature type="disulfide bond" evidence="4">
    <location>
        <begin position="179"/>
        <end position="197"/>
    </location>
</feature>
<feature type="mutagenesis site" description="Impairs binding to trehalose-6,6'-dimycolate." evidence="8">
    <original>EPN</original>
    <variation>QPD</variation>
    <variation>EPD</variation>
    <location>
        <begin position="169"/>
        <end position="171"/>
    </location>
</feature>
<feature type="mutagenesis site" description="Impairs trehalose-6,6'-dimycolate (TDM)-induced NF-kappa-B activation." evidence="8">
    <original>N</original>
    <variation>Q</variation>
    <location>
        <position position="172"/>
    </location>
</feature>
<feature type="mutagenesis site" description="Reduces trehalose-6,6'-dimycolate (TDM)-induced NF-kappa-B activation." evidence="8">
    <original>R</original>
    <variation>V</variation>
    <location>
        <position position="183"/>
    </location>
</feature>
<feature type="mutagenesis site" description="Reduces trehalose-6,6'-dimycolate (TDM)-induced NF-kappa-B activation." evidence="8">
    <original>FL</original>
    <variation>AA</variation>
    <location>
        <begin position="198"/>
        <end position="199"/>
    </location>
</feature>
<feature type="strand" evidence="13">
    <location>
        <begin position="85"/>
        <end position="87"/>
    </location>
</feature>
<feature type="strand" evidence="13">
    <location>
        <begin position="90"/>
        <end position="94"/>
    </location>
</feature>
<feature type="helix" evidence="13">
    <location>
        <begin position="101"/>
        <end position="110"/>
    </location>
</feature>
<feature type="helix" evidence="13">
    <location>
        <begin position="121"/>
        <end position="130"/>
    </location>
</feature>
<feature type="strand" evidence="13">
    <location>
        <begin position="137"/>
        <end position="143"/>
    </location>
</feature>
<feature type="strand" evidence="13">
    <location>
        <begin position="150"/>
        <end position="152"/>
    </location>
</feature>
<feature type="strand" evidence="13">
    <location>
        <begin position="174"/>
        <end position="182"/>
    </location>
</feature>
<feature type="strand" evidence="13">
    <location>
        <begin position="192"/>
        <end position="196"/>
    </location>
</feature>
<feature type="strand" evidence="13">
    <location>
        <begin position="201"/>
        <end position="208"/>
    </location>
</feature>
<name>CLC4E_HUMAN</name>
<accession>Q9ULY5</accession>
<accession>B2R6Q6</accession>